<sequence>MTDIPESLKPFVTKKVIHSTWAGTFLCKPQAIFQPRNVEEIQELIKQARLHGKTIMTVGSGHSPSDLTMTTEWLCNLDKFNHVLLEEPYYAPKSPTDDTPEIKFVDLTVEAGTRIFELNEYLKRNNLAIQNLGSISDQSIAGLISTGTHGSTQYHGLVSQQVVSVKFLNSAGELITCSSVDKPEYFRAILLSLGKIGIITHVTLRTCPKYTIKSKQEIINFETLLNNWDNLWLESEFIRIWWFPYTNKCVLWRANKSTDPLSDPRPSWYGTKLGRFFYESLLWVSVHLFPRLTPFVEKFVFGQQYGEVETLGKGDIAVQNSVEGLNMDCLFSQFVNEWSSPLNSGPEILTELKKIITDASQTGDFFVHAPIEVRCSNVTYSDEPFTDDKNQKSLYPSQEWLSNRSKTSAGPIPGNNLRPYLDNSPKLPYSKDGKITNDQLTLFINATMYRPFGTNVETHKWFQLFEDVMSKAGGKPHWAKNFIGLTQDEKYDKQQDLKTQLEFGGKPFYTMLGFKPVMQDWFGKDLVAFNKVRKETDPDGVFLSGKVWAERNGILLD</sequence>
<proteinExistence type="evidence at protein level"/>
<accession>O93852</accession>
<accession>A0A1D8PU25</accession>
<accession>Q5ACU1</accession>
<evidence type="ECO:0000250" key="1">
    <source>
        <dbReference type="UniProtKB" id="Q9FUJ1"/>
    </source>
</evidence>
<evidence type="ECO:0000255" key="2"/>
<evidence type="ECO:0000255" key="3">
    <source>
        <dbReference type="PROSITE-ProRule" id="PRU00718"/>
    </source>
</evidence>
<evidence type="ECO:0000269" key="4">
    <source>
    </source>
</evidence>
<evidence type="ECO:0000269" key="5">
    <source>
    </source>
</evidence>
<evidence type="ECO:0000303" key="6">
    <source>
    </source>
</evidence>
<evidence type="ECO:0000305" key="7"/>
<gene>
    <name evidence="6" type="primary">ALO1</name>
    <name evidence="6" type="synonym">ALO</name>
    <name type="ordered locus">CAALFM_CR09790WA</name>
    <name type="ORF">CaO19.7551</name>
</gene>
<comment type="function">
    <text evidence="4 5">D-arabinono-1,4-lactone oxidase that catalyzes the final step of biosynthesis of D-erythroascorbic acid, an important antioxidant and one of the virulence factors enhancing the pathogenicity (PubMed:11349062, PubMed:7957197). Is also able to oxidize L-galactono-1,4-lactone, L-xylono-1,4-lactone and L-gulono-1,4-lactone (PubMed:7957197).</text>
</comment>
<comment type="catalytic activity">
    <reaction evidence="5">
        <text>D-arabinono-1,4-lactone + O2 = dehydro-D-arabinono-1,4-lactone + H2O2 + H(+)</text>
        <dbReference type="Rhea" id="RHEA:23756"/>
        <dbReference type="ChEBI" id="CHEBI:15378"/>
        <dbReference type="ChEBI" id="CHEBI:15379"/>
        <dbReference type="ChEBI" id="CHEBI:16240"/>
        <dbReference type="ChEBI" id="CHEBI:16292"/>
        <dbReference type="ChEBI" id="CHEBI:58277"/>
        <dbReference type="EC" id="1.1.3.37"/>
    </reaction>
    <physiologicalReaction direction="left-to-right" evidence="5">
        <dbReference type="Rhea" id="RHEA:23757"/>
    </physiologicalReaction>
</comment>
<comment type="catalytic activity">
    <reaction evidence="5">
        <text>L-galactono-1,4-lactone + O2 = L-ascorbate + H2O2 + H(+)</text>
        <dbReference type="Rhea" id="RHEA:20617"/>
        <dbReference type="ChEBI" id="CHEBI:15378"/>
        <dbReference type="ChEBI" id="CHEBI:15379"/>
        <dbReference type="ChEBI" id="CHEBI:16240"/>
        <dbReference type="ChEBI" id="CHEBI:17464"/>
        <dbReference type="ChEBI" id="CHEBI:38290"/>
        <dbReference type="EC" id="1.3.3.12"/>
    </reaction>
    <physiologicalReaction direction="right-to-left" evidence="5">
        <dbReference type="Rhea" id="RHEA:20619"/>
    </physiologicalReaction>
</comment>
<comment type="catalytic activity">
    <reaction evidence="5">
        <text>L-gulono-1,4-lactone + O2 = L-ascorbate + H2O2 + H(+)</text>
        <dbReference type="Rhea" id="RHEA:32363"/>
        <dbReference type="ChEBI" id="CHEBI:15378"/>
        <dbReference type="ChEBI" id="CHEBI:15379"/>
        <dbReference type="ChEBI" id="CHEBI:16240"/>
        <dbReference type="ChEBI" id="CHEBI:17587"/>
        <dbReference type="ChEBI" id="CHEBI:38290"/>
        <dbReference type="EC" id="1.1.3.8"/>
    </reaction>
    <physiologicalReaction direction="left-to-right" evidence="5">
        <dbReference type="Rhea" id="RHEA:32364"/>
    </physiologicalReaction>
</comment>
<comment type="catalytic activity">
    <reaction evidence="5">
        <text>L-xylono-1,4-lactone + O2 = dehydro-L-arabinono-1,4-lactone + H2O2 + H(+)</text>
        <dbReference type="Rhea" id="RHEA:68360"/>
        <dbReference type="ChEBI" id="CHEBI:15378"/>
        <dbReference type="ChEBI" id="CHEBI:15379"/>
        <dbReference type="ChEBI" id="CHEBI:16240"/>
        <dbReference type="ChEBI" id="CHEBI:18118"/>
        <dbReference type="ChEBI" id="CHEBI:177361"/>
    </reaction>
    <physiologicalReaction direction="left-to-right" evidence="5">
        <dbReference type="Rhea" id="RHEA:68361"/>
    </physiologicalReaction>
</comment>
<comment type="cofactor">
    <cofactor>
        <name>FAD</name>
        <dbReference type="ChEBI" id="CHEBI:57692"/>
    </cofactor>
</comment>
<comment type="pathway">
    <text evidence="5">Cofactor biosynthesis; D-erythroascorbate biosynthesis; dehydro-D-arabinono-1,4-lactone from D-arabinose: step 2/2.</text>
</comment>
<comment type="disruption phenotype">
    <text evidence="4">Abolishes D-arabinono-1,4-lactone oxidase activity and impairs the production of D-erythroascorbic acid (PubMed:11349062). Leads to increased sensitivity towards oxidative stress, defective hyphal growth and attenuated virulence (PubMed:11349062).</text>
</comment>
<comment type="similarity">
    <text evidence="7">Belongs to the oxygen-dependent FAD-linked oxidoreductase family.</text>
</comment>
<reference key="1">
    <citation type="journal article" date="2001" name="Infect. Immun.">
        <title>Deficiency of D-erythroascorbic acid attenuates hyphal growth and virulence of Candida albicans.</title>
        <authorList>
            <person name="Huh W.-K."/>
            <person name="Kim S.-T."/>
            <person name="Kim H."/>
            <person name="Jeong G."/>
            <person name="Kang S.-O."/>
        </authorList>
    </citation>
    <scope>NUCLEOTIDE SEQUENCE [GENOMIC DNA]</scope>
    <scope>FUNCTION</scope>
    <scope>DISRUPTION PHENOTYPE</scope>
    <source>
        <strain>ATCC 10231 / CBS 6431 / DSM 1386 / NBRC 1594</strain>
    </source>
</reference>
<reference key="2">
    <citation type="journal article" date="2004" name="Proc. Natl. Acad. Sci. U.S.A.">
        <title>The diploid genome sequence of Candida albicans.</title>
        <authorList>
            <person name="Jones T."/>
            <person name="Federspiel N.A."/>
            <person name="Chibana H."/>
            <person name="Dungan J."/>
            <person name="Kalman S."/>
            <person name="Magee B.B."/>
            <person name="Newport G."/>
            <person name="Thorstenson Y.R."/>
            <person name="Agabian N."/>
            <person name="Magee P.T."/>
            <person name="Davis R.W."/>
            <person name="Scherer S."/>
        </authorList>
    </citation>
    <scope>NUCLEOTIDE SEQUENCE [LARGE SCALE GENOMIC DNA]</scope>
    <source>
        <strain>SC5314 / ATCC MYA-2876</strain>
    </source>
</reference>
<reference key="3">
    <citation type="journal article" date="2007" name="Genome Biol.">
        <title>Assembly of the Candida albicans genome into sixteen supercontigs aligned on the eight chromosomes.</title>
        <authorList>
            <person name="van het Hoog M."/>
            <person name="Rast T.J."/>
            <person name="Martchenko M."/>
            <person name="Grindle S."/>
            <person name="Dignard D."/>
            <person name="Hogues H."/>
            <person name="Cuomo C."/>
            <person name="Berriman M."/>
            <person name="Scherer S."/>
            <person name="Magee B.B."/>
            <person name="Whiteway M."/>
            <person name="Chibana H."/>
            <person name="Nantel A."/>
            <person name="Magee P.T."/>
        </authorList>
    </citation>
    <scope>GENOME REANNOTATION</scope>
    <source>
        <strain>SC5314 / ATCC MYA-2876</strain>
    </source>
</reference>
<reference key="4">
    <citation type="journal article" date="2013" name="Genome Biol.">
        <title>Assembly of a phased diploid Candida albicans genome facilitates allele-specific measurements and provides a simple model for repeat and indel structure.</title>
        <authorList>
            <person name="Muzzey D."/>
            <person name="Schwartz K."/>
            <person name="Weissman J.S."/>
            <person name="Sherlock G."/>
        </authorList>
    </citation>
    <scope>NUCLEOTIDE SEQUENCE [LARGE SCALE GENOMIC DNA]</scope>
    <scope>GENOME REANNOTATION</scope>
    <source>
        <strain>SC5314 / ATCC MYA-2876</strain>
    </source>
</reference>
<reference key="5">
    <citation type="journal article" date="1994" name="Eur. J. Biochem.">
        <title>Characterisation of D-arabinono-1,4-lactone oxidase from Candida albicans ATCC 10231.</title>
        <authorList>
            <person name="Huh W.K."/>
            <person name="Kim S.T."/>
            <person name="Yang K.S."/>
            <person name="Seok Y.J."/>
            <person name="Hah Y.C."/>
            <person name="Kang S.O."/>
        </authorList>
    </citation>
    <scope>FUNCTION</scope>
    <scope>CATALYTIC ACTIVITY</scope>
    <scope>SUBSTRATE SPECIFICITY</scope>
    <scope>BIOPHYSICOCHEMICAL PROPERTIES</scope>
    <scope>PATHWAY</scope>
</reference>
<keyword id="KW-0274">FAD</keyword>
<keyword id="KW-0285">Flavoprotein</keyword>
<keyword id="KW-0560">Oxidoreductase</keyword>
<keyword id="KW-1185">Reference proteome</keyword>
<keyword id="KW-0843">Virulence</keyword>
<protein>
    <recommendedName>
        <fullName evidence="6">D-arabinono-1,4-lactone oxidase</fullName>
        <shortName evidence="6">ALO</shortName>
        <ecNumber evidence="5">1.1.3.37</ecNumber>
        <ecNumber evidence="5">1.1.3.8</ecNumber>
        <ecNumber evidence="5">1.3.3.12</ecNumber>
    </recommendedName>
    <alternativeName>
        <fullName evidence="7">FAD-linked oxidoreductase ALO1</fullName>
    </alternativeName>
    <alternativeName>
        <fullName evidence="6">L-galactono-gamma-lactone oxidase</fullName>
    </alternativeName>
</protein>
<dbReference type="EC" id="1.1.3.37" evidence="5"/>
<dbReference type="EC" id="1.1.3.8" evidence="5"/>
<dbReference type="EC" id="1.3.3.12" evidence="5"/>
<dbReference type="EMBL" id="AF031228">
    <property type="protein sequence ID" value="AAC98913.1"/>
    <property type="molecule type" value="Genomic_DNA"/>
</dbReference>
<dbReference type="EMBL" id="CP017630">
    <property type="protein sequence ID" value="AOW31636.1"/>
    <property type="molecule type" value="Genomic_DNA"/>
</dbReference>
<dbReference type="RefSeq" id="XP_719313.1">
    <property type="nucleotide sequence ID" value="XM_714220.1"/>
</dbReference>
<dbReference type="SMR" id="O93852"/>
<dbReference type="BioGRID" id="1222077">
    <property type="interactions" value="1"/>
</dbReference>
<dbReference type="FunCoup" id="O93852">
    <property type="interactions" value="89"/>
</dbReference>
<dbReference type="STRING" id="237561.O93852"/>
<dbReference type="EnsemblFungi" id="CR_09790W_A-T">
    <property type="protein sequence ID" value="CR_09790W_A-T-p1"/>
    <property type="gene ID" value="CR_09790W_A"/>
</dbReference>
<dbReference type="GeneID" id="3638983"/>
<dbReference type="KEGG" id="cal:CAALFM_CR09790WA"/>
<dbReference type="CGD" id="CAL0000174500">
    <property type="gene designation" value="ALO1"/>
</dbReference>
<dbReference type="VEuPathDB" id="FungiDB:CR_09790W_A"/>
<dbReference type="eggNOG" id="KOG4730">
    <property type="taxonomic scope" value="Eukaryota"/>
</dbReference>
<dbReference type="HOGENOM" id="CLU_003896_4_1_1"/>
<dbReference type="InParanoid" id="O93852"/>
<dbReference type="OMA" id="YPRFGEF"/>
<dbReference type="OrthoDB" id="610608at2759"/>
<dbReference type="UniPathway" id="UPA00771">
    <property type="reaction ID" value="UER00766"/>
</dbReference>
<dbReference type="PHI-base" id="PHI:197"/>
<dbReference type="Proteomes" id="UP000000559">
    <property type="component" value="Chromosome R"/>
</dbReference>
<dbReference type="GO" id="GO:0005739">
    <property type="term" value="C:mitochondrion"/>
    <property type="evidence" value="ECO:0000314"/>
    <property type="project" value="CGD"/>
</dbReference>
<dbReference type="GO" id="GO:0005886">
    <property type="term" value="C:plasma membrane"/>
    <property type="evidence" value="ECO:0000314"/>
    <property type="project" value="CGD"/>
</dbReference>
<dbReference type="GO" id="GO:0003885">
    <property type="term" value="F:D-arabinono-1,4-lactone oxidase activity"/>
    <property type="evidence" value="ECO:0000314"/>
    <property type="project" value="CGD"/>
</dbReference>
<dbReference type="GO" id="GO:0071949">
    <property type="term" value="F:FAD binding"/>
    <property type="evidence" value="ECO:0007669"/>
    <property type="project" value="InterPro"/>
</dbReference>
<dbReference type="GO" id="GO:0050024">
    <property type="term" value="F:L-galactonolactone oxidase activity"/>
    <property type="evidence" value="ECO:0007669"/>
    <property type="project" value="RHEA"/>
</dbReference>
<dbReference type="GO" id="GO:0050105">
    <property type="term" value="F:L-gulonolactone oxidase activity"/>
    <property type="evidence" value="ECO:0007669"/>
    <property type="project" value="RHEA"/>
</dbReference>
<dbReference type="GO" id="GO:1990748">
    <property type="term" value="P:cellular detoxification"/>
    <property type="evidence" value="ECO:0000315"/>
    <property type="project" value="UniProtKB"/>
</dbReference>
<dbReference type="GO" id="GO:0034599">
    <property type="term" value="P:cellular response to oxidative stress"/>
    <property type="evidence" value="ECO:0000315"/>
    <property type="project" value="CGD"/>
</dbReference>
<dbReference type="GO" id="GO:0009267">
    <property type="term" value="P:cellular response to starvation"/>
    <property type="evidence" value="ECO:0000315"/>
    <property type="project" value="CGD"/>
</dbReference>
<dbReference type="GO" id="GO:0030447">
    <property type="term" value="P:filamentous growth"/>
    <property type="evidence" value="ECO:0000315"/>
    <property type="project" value="CGD"/>
</dbReference>
<dbReference type="GO" id="GO:0044182">
    <property type="term" value="P:filamentous growth of a population of unicellular organisms"/>
    <property type="evidence" value="ECO:0000315"/>
    <property type="project" value="CGD"/>
</dbReference>
<dbReference type="GO" id="GO:0036170">
    <property type="term" value="P:filamentous growth of a population of unicellular organisms in response to starvation"/>
    <property type="evidence" value="ECO:0000315"/>
    <property type="project" value="CGD"/>
</dbReference>
<dbReference type="FunFam" id="3.30.465.10:FF:000042">
    <property type="entry name" value="D-arabinono-1,4-lactone oxidase"/>
    <property type="match status" value="1"/>
</dbReference>
<dbReference type="Gene3D" id="3.30.465.10">
    <property type="match status" value="1"/>
</dbReference>
<dbReference type="Gene3D" id="3.30.70.2520">
    <property type="match status" value="1"/>
</dbReference>
<dbReference type="Gene3D" id="3.30.43.10">
    <property type="entry name" value="Uridine Diphospho-n-acetylenolpyruvylglucosamine Reductase, domain 2"/>
    <property type="match status" value="1"/>
</dbReference>
<dbReference type="InterPro" id="IPR007173">
    <property type="entry name" value="ALO_C"/>
</dbReference>
<dbReference type="InterPro" id="IPR016166">
    <property type="entry name" value="FAD-bd_PCMH"/>
</dbReference>
<dbReference type="InterPro" id="IPR036318">
    <property type="entry name" value="FAD-bd_PCMH-like_sf"/>
</dbReference>
<dbReference type="InterPro" id="IPR016167">
    <property type="entry name" value="FAD-bd_PCMH_sub1"/>
</dbReference>
<dbReference type="InterPro" id="IPR016169">
    <property type="entry name" value="FAD-bd_PCMH_sub2"/>
</dbReference>
<dbReference type="InterPro" id="IPR010031">
    <property type="entry name" value="FAD_lactone_oxidase-like"/>
</dbReference>
<dbReference type="InterPro" id="IPR006094">
    <property type="entry name" value="Oxid_FAD_bind_N"/>
</dbReference>
<dbReference type="InterPro" id="IPR006093">
    <property type="entry name" value="Oxy_OxRdtase_FAD_BS"/>
</dbReference>
<dbReference type="InterPro" id="IPR030654">
    <property type="entry name" value="Sugar_lactone_oxidase"/>
</dbReference>
<dbReference type="NCBIfam" id="TIGR01678">
    <property type="entry name" value="FAD_lactone_ox"/>
    <property type="match status" value="1"/>
</dbReference>
<dbReference type="PANTHER" id="PTHR43762:SF1">
    <property type="entry name" value="D-ARABINONO-1,4-LACTONE OXIDASE"/>
    <property type="match status" value="1"/>
</dbReference>
<dbReference type="PANTHER" id="PTHR43762">
    <property type="entry name" value="L-GULONOLACTONE OXIDASE"/>
    <property type="match status" value="1"/>
</dbReference>
<dbReference type="Pfam" id="PF04030">
    <property type="entry name" value="ALO"/>
    <property type="match status" value="1"/>
</dbReference>
<dbReference type="Pfam" id="PF01565">
    <property type="entry name" value="FAD_binding_4"/>
    <property type="match status" value="1"/>
</dbReference>
<dbReference type="PIRSF" id="PIRSF000136">
    <property type="entry name" value="LGO_GLO"/>
    <property type="match status" value="1"/>
</dbReference>
<dbReference type="SUPFAM" id="SSF56176">
    <property type="entry name" value="FAD-binding/transporter-associated domain-like"/>
    <property type="match status" value="1"/>
</dbReference>
<dbReference type="PROSITE" id="PS51387">
    <property type="entry name" value="FAD_PCMH"/>
    <property type="match status" value="1"/>
</dbReference>
<dbReference type="PROSITE" id="PS00862">
    <property type="entry name" value="OX2_COVAL_FAD"/>
    <property type="match status" value="1"/>
</dbReference>
<name>ALO1_CANAL</name>
<feature type="chain" id="PRO_0000128164" description="D-arabinono-1,4-lactone oxidase">
    <location>
        <begin position="1"/>
        <end position="557"/>
    </location>
</feature>
<feature type="domain" description="FAD-binding PCMH-type" evidence="3">
    <location>
        <begin position="25"/>
        <end position="209"/>
    </location>
</feature>
<feature type="binding site" evidence="1">
    <location>
        <begin position="58"/>
        <end position="61"/>
    </location>
    <ligand>
        <name>FAD</name>
        <dbReference type="ChEBI" id="CHEBI:57692"/>
    </ligand>
</feature>
<feature type="binding site" evidence="1">
    <location>
        <begin position="62"/>
        <end position="63"/>
    </location>
    <ligand>
        <name>FAD</name>
        <dbReference type="ChEBI" id="CHEBI:57692"/>
    </ligand>
</feature>
<feature type="binding site" evidence="1">
    <location>
        <begin position="144"/>
        <end position="148"/>
    </location>
    <ligand>
        <name>FAD</name>
        <dbReference type="ChEBI" id="CHEBI:57692"/>
    </ligand>
</feature>
<feature type="binding site" evidence="1">
    <location>
        <position position="199"/>
    </location>
    <ligand>
        <name>FAD</name>
        <dbReference type="ChEBI" id="CHEBI:57692"/>
    </ligand>
</feature>
<feature type="binding site" evidence="1">
    <location>
        <begin position="543"/>
        <end position="546"/>
    </location>
    <ligand>
        <name>FAD</name>
        <dbReference type="ChEBI" id="CHEBI:57692"/>
    </ligand>
</feature>
<feature type="modified residue" description="Pros-8alpha-FAD histidine" evidence="2">
    <location>
        <position position="62"/>
    </location>
</feature>
<organism>
    <name type="scientific">Candida albicans (strain SC5314 / ATCC MYA-2876)</name>
    <name type="common">Yeast</name>
    <dbReference type="NCBI Taxonomy" id="237561"/>
    <lineage>
        <taxon>Eukaryota</taxon>
        <taxon>Fungi</taxon>
        <taxon>Dikarya</taxon>
        <taxon>Ascomycota</taxon>
        <taxon>Saccharomycotina</taxon>
        <taxon>Pichiomycetes</taxon>
        <taxon>Debaryomycetaceae</taxon>
        <taxon>Candida/Lodderomyces clade</taxon>
        <taxon>Candida</taxon>
    </lineage>
</organism>